<name>GSIB_SHIF8</name>
<feature type="signal peptide" evidence="2">
    <location>
        <begin position="1"/>
        <end position="26"/>
    </location>
</feature>
<feature type="chain" id="PRO_0000279985" description="Glutathione-binding protein GsiB">
    <location>
        <begin position="27"/>
        <end position="514"/>
    </location>
</feature>
<evidence type="ECO:0000250" key="1">
    <source>
        <dbReference type="UniProtKB" id="P75797"/>
    </source>
</evidence>
<evidence type="ECO:0000255" key="2"/>
<evidence type="ECO:0000305" key="3"/>
<accession>Q0T6D2</accession>
<organism>
    <name type="scientific">Shigella flexneri serotype 5b (strain 8401)</name>
    <dbReference type="NCBI Taxonomy" id="373384"/>
    <lineage>
        <taxon>Bacteria</taxon>
        <taxon>Pseudomonadati</taxon>
        <taxon>Pseudomonadota</taxon>
        <taxon>Gammaproteobacteria</taxon>
        <taxon>Enterobacterales</taxon>
        <taxon>Enterobacteriaceae</taxon>
        <taxon>Shigella</taxon>
    </lineage>
</organism>
<protein>
    <recommendedName>
        <fullName evidence="1">Glutathione-binding protein GsiB</fullName>
    </recommendedName>
</protein>
<reference key="1">
    <citation type="journal article" date="2006" name="BMC Genomics">
        <title>Complete genome sequence of Shigella flexneri 5b and comparison with Shigella flexneri 2a.</title>
        <authorList>
            <person name="Nie H."/>
            <person name="Yang F."/>
            <person name="Zhang X."/>
            <person name="Yang J."/>
            <person name="Chen L."/>
            <person name="Wang J."/>
            <person name="Xiong Z."/>
            <person name="Peng J."/>
            <person name="Sun L."/>
            <person name="Dong J."/>
            <person name="Xue Y."/>
            <person name="Xu X."/>
            <person name="Chen S."/>
            <person name="Yao Z."/>
            <person name="Shen Y."/>
            <person name="Jin Q."/>
        </authorList>
    </citation>
    <scope>NUCLEOTIDE SEQUENCE [LARGE SCALE GENOMIC DNA]</scope>
    <source>
        <strain>8401</strain>
    </source>
</reference>
<dbReference type="EMBL" id="CP000266">
    <property type="protein sequence ID" value="ABF03044.1"/>
    <property type="molecule type" value="Genomic_DNA"/>
</dbReference>
<dbReference type="RefSeq" id="WP_000090148.1">
    <property type="nucleotide sequence ID" value="NC_008258.1"/>
</dbReference>
<dbReference type="SMR" id="Q0T6D2"/>
<dbReference type="KEGG" id="sfv:SFV_0813"/>
<dbReference type="HOGENOM" id="CLU_017028_7_3_6"/>
<dbReference type="Proteomes" id="UP000000659">
    <property type="component" value="Chromosome"/>
</dbReference>
<dbReference type="GO" id="GO:0043190">
    <property type="term" value="C:ATP-binding cassette (ABC) transporter complex"/>
    <property type="evidence" value="ECO:0007669"/>
    <property type="project" value="InterPro"/>
</dbReference>
<dbReference type="GO" id="GO:0030288">
    <property type="term" value="C:outer membrane-bounded periplasmic space"/>
    <property type="evidence" value="ECO:0007669"/>
    <property type="project" value="TreeGrafter"/>
</dbReference>
<dbReference type="GO" id="GO:1904680">
    <property type="term" value="F:peptide transmembrane transporter activity"/>
    <property type="evidence" value="ECO:0007669"/>
    <property type="project" value="TreeGrafter"/>
</dbReference>
<dbReference type="GO" id="GO:0042938">
    <property type="term" value="P:dipeptide transport"/>
    <property type="evidence" value="ECO:0007669"/>
    <property type="project" value="TreeGrafter"/>
</dbReference>
<dbReference type="CDD" id="cd08499">
    <property type="entry name" value="PBP2_Ylib_like"/>
    <property type="match status" value="1"/>
</dbReference>
<dbReference type="FunFam" id="3.10.105.10:FF:000003">
    <property type="entry name" value="Glutathione ABC transporter substrate-binding protein GsiB"/>
    <property type="match status" value="1"/>
</dbReference>
<dbReference type="FunFam" id="3.40.190.10:FF:000094">
    <property type="entry name" value="Glutathione ABC transporter substrate-binding protein GsiB"/>
    <property type="match status" value="1"/>
</dbReference>
<dbReference type="FunFam" id="3.90.76.10:FF:000003">
    <property type="entry name" value="Glutathione ABC transporter substrate-binding protein GsiB"/>
    <property type="match status" value="1"/>
</dbReference>
<dbReference type="Gene3D" id="3.90.76.10">
    <property type="entry name" value="Dipeptide-binding Protein, Domain 1"/>
    <property type="match status" value="1"/>
</dbReference>
<dbReference type="Gene3D" id="3.10.105.10">
    <property type="entry name" value="Dipeptide-binding Protein, Domain 3"/>
    <property type="match status" value="1"/>
</dbReference>
<dbReference type="Gene3D" id="3.40.190.10">
    <property type="entry name" value="Periplasmic binding protein-like II"/>
    <property type="match status" value="1"/>
</dbReference>
<dbReference type="InterPro" id="IPR030678">
    <property type="entry name" value="Peptide/Ni-bd"/>
</dbReference>
<dbReference type="InterPro" id="IPR039424">
    <property type="entry name" value="SBP_5"/>
</dbReference>
<dbReference type="InterPro" id="IPR023765">
    <property type="entry name" value="SBP_5_CS"/>
</dbReference>
<dbReference type="InterPro" id="IPR000914">
    <property type="entry name" value="SBP_5_dom"/>
</dbReference>
<dbReference type="NCBIfam" id="NF011942">
    <property type="entry name" value="PRK15413.1"/>
    <property type="match status" value="1"/>
</dbReference>
<dbReference type="PANTHER" id="PTHR30290:SF32">
    <property type="entry name" value="GLUTATHIONE-BINDING PROTEIN GSIB"/>
    <property type="match status" value="1"/>
</dbReference>
<dbReference type="PANTHER" id="PTHR30290">
    <property type="entry name" value="PERIPLASMIC BINDING COMPONENT OF ABC TRANSPORTER"/>
    <property type="match status" value="1"/>
</dbReference>
<dbReference type="Pfam" id="PF00496">
    <property type="entry name" value="SBP_bac_5"/>
    <property type="match status" value="1"/>
</dbReference>
<dbReference type="PIRSF" id="PIRSF002741">
    <property type="entry name" value="MppA"/>
    <property type="match status" value="1"/>
</dbReference>
<dbReference type="SUPFAM" id="SSF53850">
    <property type="entry name" value="Periplasmic binding protein-like II"/>
    <property type="match status" value="1"/>
</dbReference>
<dbReference type="PROSITE" id="PS01040">
    <property type="entry name" value="SBP_BACTERIAL_5"/>
    <property type="match status" value="1"/>
</dbReference>
<sequence>MARAVHRSGLVALGIATALMASCAFAAKDVVVAVGSNFTTLDPYDANDTLSQAVAKSFYQGLFGLDKEMKLKNVLAESYTVSDDGITYTVKLREGIKFQDGTDFNAVAVKANLDRASDPANHLKRYNLYKNIAKTEAIDPTTVKITLKQPFSAFINILVHPATAMISPTALEKYGKEIGFHPVGTGPYELDTWNQTDFVKVKKFAGYWQPGLPKLDSITWRPVADNNTRAAMLQTGEAQFAFPIPYEQATLLEKNKNIELMASPSIMQRYISMNVTQKPFDNPKVREALNYAINRPALVKVAFAGYATPATGVVPPSIAIAYAQSYKPWPYDPVKARELLKEAGYPNGFSTTLWSSHNHSTAQKVLQFTQQQLAQVGIKAQVTAMDAGQRAAEVEGKGQKESGVRMFYTGWSASTGEADWALSPLFASQNWPPTLFNTAFYSNKQVDDFLAQALKTNDPAEKTRLYKAAQDIIWQESPWIPLVVEKLVSAHSKNLTGFWIMPDTGFSFEDADLQ</sequence>
<proteinExistence type="inferred from homology"/>
<comment type="function">
    <text evidence="1">Part of the ABC transporter complex GsiABCD involved in glutathione import. Binds glutathione.</text>
</comment>
<comment type="subunit">
    <text evidence="1">The complex is composed of two ATP-binding proteins (GsiA), two transmembrane proteins (GsiC and GsiD) and a solute-binding protein (GsiB).</text>
</comment>
<comment type="subcellular location">
    <subcellularLocation>
        <location evidence="1">Periplasm</location>
    </subcellularLocation>
</comment>
<comment type="similarity">
    <text evidence="3">Belongs to the bacterial solute-binding protein 5 family.</text>
</comment>
<gene>
    <name evidence="1" type="primary">gsiB</name>
    <name type="ordered locus">SFV_0813</name>
</gene>
<keyword id="KW-0574">Periplasm</keyword>
<keyword id="KW-0732">Signal</keyword>
<keyword id="KW-0813">Transport</keyword>